<proteinExistence type="evidence at protein level"/>
<sequence>MALRAMRGIVNGAAPELPVPTGGPMAGAREQALAVSRNYLSQPRLTYKTVSGVNGPLVILDHVKFPRYAEIVHLTLPDGTKRSGQVLEVSGSKAVVQVFEGTSGIDAKKTSCEFTGDILRTPVSEDMLGRVFNGSGKPIDRGPVVLAEDFLDIMGQPINPQCRIYPEEMIQTGISAIDGMNSIARGQKIPIFSAAGLPHNEIAAQICRQAGLVKKSKDVVDYSEENFAIVFAAMGVNMETARFFKSDFEENGSMDNVCLFLNLANDPTIERIITPRLALTTAEFLAYQCEKHVLVILTDMSSYAEALREVSAAREEVPGRRGFPGYMYTDLATIYERAGRVEGRNGSITQIPILTMPNDDITHPIPDLTGYITEGQIYVDRQLHNRQIYPPINVLPSLSRLMKSAIGEGMTRKDHADVSNQLYACYAIGKDVQAMKAVVGEEALTSDDLLYLEFLQKFEKNFITQGPYENRTVYETLDIGWQLLRIFPKEMLKRIPQSTLSEFYPRDSAKH</sequence>
<accession>P62814</accession>
<accession>O09045</accession>
<accession>P50517</accession>
<accession>Q3TG74</accession>
<accession>Q3TL62</accession>
<accession>Q3TVK6</accession>
<accession>Q3TWR0</accession>
<accession>Q3U791</accession>
<accession>Q3U7C8</accession>
<accession>Q3U9Z0</accession>
<accession>Q3UAW7</accession>
<organism>
    <name type="scientific">Mus musculus</name>
    <name type="common">Mouse</name>
    <dbReference type="NCBI Taxonomy" id="10090"/>
    <lineage>
        <taxon>Eukaryota</taxon>
        <taxon>Metazoa</taxon>
        <taxon>Chordata</taxon>
        <taxon>Craniata</taxon>
        <taxon>Vertebrata</taxon>
        <taxon>Euteleostomi</taxon>
        <taxon>Mammalia</taxon>
        <taxon>Eutheria</taxon>
        <taxon>Euarchontoglires</taxon>
        <taxon>Glires</taxon>
        <taxon>Rodentia</taxon>
        <taxon>Myomorpha</taxon>
        <taxon>Muroidea</taxon>
        <taxon>Muridae</taxon>
        <taxon>Murinae</taxon>
        <taxon>Mus</taxon>
        <taxon>Mus</taxon>
    </lineage>
</organism>
<comment type="function">
    <text evidence="1 5">Non-catalytic subunit of the V1 complex of vacuolar(H+)-ATPase (V-ATPase), a multisubunit enzyme composed of a peripheral complex (V1) that hydrolyzes ATP and a membrane integral complex (V0) that translocates protons (PubMed:17898041). V-ATPase is responsible for acidifying and maintaining the pH of intracellular compartments and in some cell types, is targeted to the plasma membrane, where it is responsible for acidifying the extracellular environment (By similarity). In renal intercalated cells, can partially compensate the lack of ATP6V1B1 and mediate secretion of protons (H+) into the urine under base-line conditions but not in conditions of acid load (PubMed:17898041).</text>
</comment>
<comment type="subunit">
    <text evidence="1">V-ATPase is a heteromultimeric enzyme made up of two complexes: the ATP-hydrolytic V1 complex and the proton translocation V0 complex (By similarity). The V1 complex consists of three catalytic AB heterodimers that form a heterohexamer, three peripheral stalks each consisting of EG heterodimers, one central rotor including subunits D and F, and the regulatory subunits C and H (By similarity). The proton translocation complex V0 consists of the proton transport subunit a, a ring of proteolipid subunits c9c'', rotary subunit d, subunits e and f, and the accessory subunits ATP6AP1/Ac45 and ATP6AP2/PRR (By similarity).</text>
</comment>
<comment type="subcellular location">
    <subcellularLocation>
        <location evidence="3 4 5 7">Apical cell membrane</location>
    </subcellularLocation>
    <subcellularLocation>
        <location evidence="1">Melanosome</location>
    </subcellularLocation>
    <subcellularLocation>
        <location evidence="3 5">Cytoplasm</location>
    </subcellularLocation>
    <subcellularLocation>
        <location evidence="2">Cytoplasmic vesicle</location>
        <location evidence="2">Secretory vesicle</location>
        <location evidence="2">Synaptic vesicle membrane</location>
        <topology evidence="8">Peripheral membrane protein</topology>
    </subcellularLocation>
    <subcellularLocation>
        <location evidence="2">Cytoplasmic vesicle</location>
        <location evidence="2">Clathrin-coated vesicle membrane</location>
        <topology evidence="8">Peripheral membrane protein</topology>
    </subcellularLocation>
</comment>
<comment type="tissue specificity">
    <text evidence="3 4 5 6 7">Kidney; found in early distal nephron, encompassing thick ascending limbs and distal convoluted tubules and in the alpha-intercalated cells of the cortical collecting ducts (at protein level) (PubMed:15013950, PubMed:16174750, PubMed:17898041, PubMed:29993276). Expressed in epididymal clear cells (at protein level) (PubMed:15013950). Mainly expressed in the organ of Corti and spiral ganglion neurons, in both the early postnatal cochlea (P2) and the adult cochlea (P30) (PubMed:24913193).</text>
</comment>
<comment type="disruption phenotype">
    <text evidence="6">Morpholino knockdown in the whole cochlea, especially in hair cells and spiral ganglion neurons causes a dose-dependent hearing loss.</text>
</comment>
<comment type="similarity">
    <text evidence="8">Belongs to the ATPase alpha/beta chains family.</text>
</comment>
<comment type="sequence caution" evidence="8">
    <conflict type="erroneous initiation">
        <sequence resource="EMBL-CDS" id="BAE30303"/>
    </conflict>
</comment>
<comment type="sequence caution" evidence="8">
    <conflict type="erroneous initiation">
        <sequence resource="EMBL-CDS" id="BAE30526"/>
    </conflict>
</comment>
<comment type="sequence caution" evidence="8">
    <conflict type="erroneous initiation">
        <sequence resource="EMBL-CDS" id="BAE31441"/>
    </conflict>
</comment>
<name>VATB2_MOUSE</name>
<keyword id="KW-0002">3D-structure</keyword>
<keyword id="KW-0067">ATP-binding</keyword>
<keyword id="KW-1003">Cell membrane</keyword>
<keyword id="KW-0963">Cytoplasm</keyword>
<keyword id="KW-0968">Cytoplasmic vesicle</keyword>
<keyword id="KW-0903">Direct protein sequencing</keyword>
<keyword id="KW-0375">Hydrogen ion transport</keyword>
<keyword id="KW-0406">Ion transport</keyword>
<keyword id="KW-0472">Membrane</keyword>
<keyword id="KW-0547">Nucleotide-binding</keyword>
<keyword id="KW-1185">Reference proteome</keyword>
<keyword id="KW-0770">Synapse</keyword>
<keyword id="KW-0813">Transport</keyword>
<gene>
    <name type="primary">Atp6v1b2</name>
    <name type="synonym">Atp6b2</name>
    <name type="synonym">Vat2</name>
</gene>
<evidence type="ECO:0000250" key="1">
    <source>
        <dbReference type="UniProtKB" id="P21281"/>
    </source>
</evidence>
<evidence type="ECO:0000250" key="2">
    <source>
        <dbReference type="UniProtKB" id="P62815"/>
    </source>
</evidence>
<evidence type="ECO:0000269" key="3">
    <source>
    </source>
</evidence>
<evidence type="ECO:0000269" key="4">
    <source>
    </source>
</evidence>
<evidence type="ECO:0000269" key="5">
    <source>
    </source>
</evidence>
<evidence type="ECO:0000269" key="6">
    <source>
    </source>
</evidence>
<evidence type="ECO:0000269" key="7">
    <source>
    </source>
</evidence>
<evidence type="ECO:0000305" key="8"/>
<reference key="1">
    <citation type="journal article" date="1996" name="Mol. Biol. Cell">
        <title>Resorption-cycle-dependent polarization of mRNAs for different subunits of V-ATPase in bone-resorbing osteoclasts.</title>
        <authorList>
            <person name="Laitala T."/>
            <person name="Howell M.L."/>
            <person name="Dean G.E."/>
            <person name="Vaananen H.K."/>
        </authorList>
    </citation>
    <scope>NUCLEOTIDE SEQUENCE [GENOMIC DNA]</scope>
</reference>
<reference key="2">
    <citation type="submission" date="1997-04" db="EMBL/GenBank/DDBJ databases">
        <title>Antisense technology and bone resorption.</title>
        <authorList>
            <person name="Westberg M.S."/>
            <person name="Lundberg L.G."/>
        </authorList>
    </citation>
    <scope>NUCLEOTIDE SEQUENCE [MRNA]</scope>
    <source>
        <strain>BALB/cJ</strain>
        <tissue>Brain</tissue>
    </source>
</reference>
<reference key="3">
    <citation type="journal article" date="2005" name="Science">
        <title>The transcriptional landscape of the mammalian genome.</title>
        <authorList>
            <person name="Carninci P."/>
            <person name="Kasukawa T."/>
            <person name="Katayama S."/>
            <person name="Gough J."/>
            <person name="Frith M.C."/>
            <person name="Maeda N."/>
            <person name="Oyama R."/>
            <person name="Ravasi T."/>
            <person name="Lenhard B."/>
            <person name="Wells C."/>
            <person name="Kodzius R."/>
            <person name="Shimokawa K."/>
            <person name="Bajic V.B."/>
            <person name="Brenner S.E."/>
            <person name="Batalov S."/>
            <person name="Forrest A.R."/>
            <person name="Zavolan M."/>
            <person name="Davis M.J."/>
            <person name="Wilming L.G."/>
            <person name="Aidinis V."/>
            <person name="Allen J.E."/>
            <person name="Ambesi-Impiombato A."/>
            <person name="Apweiler R."/>
            <person name="Aturaliya R.N."/>
            <person name="Bailey T.L."/>
            <person name="Bansal M."/>
            <person name="Baxter L."/>
            <person name="Beisel K.W."/>
            <person name="Bersano T."/>
            <person name="Bono H."/>
            <person name="Chalk A.M."/>
            <person name="Chiu K.P."/>
            <person name="Choudhary V."/>
            <person name="Christoffels A."/>
            <person name="Clutterbuck D.R."/>
            <person name="Crowe M.L."/>
            <person name="Dalla E."/>
            <person name="Dalrymple B.P."/>
            <person name="de Bono B."/>
            <person name="Della Gatta G."/>
            <person name="di Bernardo D."/>
            <person name="Down T."/>
            <person name="Engstrom P."/>
            <person name="Fagiolini M."/>
            <person name="Faulkner G."/>
            <person name="Fletcher C.F."/>
            <person name="Fukushima T."/>
            <person name="Furuno M."/>
            <person name="Futaki S."/>
            <person name="Gariboldi M."/>
            <person name="Georgii-Hemming P."/>
            <person name="Gingeras T.R."/>
            <person name="Gojobori T."/>
            <person name="Green R.E."/>
            <person name="Gustincich S."/>
            <person name="Harbers M."/>
            <person name="Hayashi Y."/>
            <person name="Hensch T.K."/>
            <person name="Hirokawa N."/>
            <person name="Hill D."/>
            <person name="Huminiecki L."/>
            <person name="Iacono M."/>
            <person name="Ikeo K."/>
            <person name="Iwama A."/>
            <person name="Ishikawa T."/>
            <person name="Jakt M."/>
            <person name="Kanapin A."/>
            <person name="Katoh M."/>
            <person name="Kawasawa Y."/>
            <person name="Kelso J."/>
            <person name="Kitamura H."/>
            <person name="Kitano H."/>
            <person name="Kollias G."/>
            <person name="Krishnan S.P."/>
            <person name="Kruger A."/>
            <person name="Kummerfeld S.K."/>
            <person name="Kurochkin I.V."/>
            <person name="Lareau L.F."/>
            <person name="Lazarevic D."/>
            <person name="Lipovich L."/>
            <person name="Liu J."/>
            <person name="Liuni S."/>
            <person name="McWilliam S."/>
            <person name="Madan Babu M."/>
            <person name="Madera M."/>
            <person name="Marchionni L."/>
            <person name="Matsuda H."/>
            <person name="Matsuzawa S."/>
            <person name="Miki H."/>
            <person name="Mignone F."/>
            <person name="Miyake S."/>
            <person name="Morris K."/>
            <person name="Mottagui-Tabar S."/>
            <person name="Mulder N."/>
            <person name="Nakano N."/>
            <person name="Nakauchi H."/>
            <person name="Ng P."/>
            <person name="Nilsson R."/>
            <person name="Nishiguchi S."/>
            <person name="Nishikawa S."/>
            <person name="Nori F."/>
            <person name="Ohara O."/>
            <person name="Okazaki Y."/>
            <person name="Orlando V."/>
            <person name="Pang K.C."/>
            <person name="Pavan W.J."/>
            <person name="Pavesi G."/>
            <person name="Pesole G."/>
            <person name="Petrovsky N."/>
            <person name="Piazza S."/>
            <person name="Reed J."/>
            <person name="Reid J.F."/>
            <person name="Ring B.Z."/>
            <person name="Ringwald M."/>
            <person name="Rost B."/>
            <person name="Ruan Y."/>
            <person name="Salzberg S.L."/>
            <person name="Sandelin A."/>
            <person name="Schneider C."/>
            <person name="Schoenbach C."/>
            <person name="Sekiguchi K."/>
            <person name="Semple C.A."/>
            <person name="Seno S."/>
            <person name="Sessa L."/>
            <person name="Sheng Y."/>
            <person name="Shibata Y."/>
            <person name="Shimada H."/>
            <person name="Shimada K."/>
            <person name="Silva D."/>
            <person name="Sinclair B."/>
            <person name="Sperling S."/>
            <person name="Stupka E."/>
            <person name="Sugiura K."/>
            <person name="Sultana R."/>
            <person name="Takenaka Y."/>
            <person name="Taki K."/>
            <person name="Tammoja K."/>
            <person name="Tan S.L."/>
            <person name="Tang S."/>
            <person name="Taylor M.S."/>
            <person name="Tegner J."/>
            <person name="Teichmann S.A."/>
            <person name="Ueda H.R."/>
            <person name="van Nimwegen E."/>
            <person name="Verardo R."/>
            <person name="Wei C.L."/>
            <person name="Yagi K."/>
            <person name="Yamanishi H."/>
            <person name="Zabarovsky E."/>
            <person name="Zhu S."/>
            <person name="Zimmer A."/>
            <person name="Hide W."/>
            <person name="Bult C."/>
            <person name="Grimmond S.M."/>
            <person name="Teasdale R.D."/>
            <person name="Liu E.T."/>
            <person name="Brusic V."/>
            <person name="Quackenbush J."/>
            <person name="Wahlestedt C."/>
            <person name="Mattick J.S."/>
            <person name="Hume D.A."/>
            <person name="Kai C."/>
            <person name="Sasaki D."/>
            <person name="Tomaru Y."/>
            <person name="Fukuda S."/>
            <person name="Kanamori-Katayama M."/>
            <person name="Suzuki M."/>
            <person name="Aoki J."/>
            <person name="Arakawa T."/>
            <person name="Iida J."/>
            <person name="Imamura K."/>
            <person name="Itoh M."/>
            <person name="Kato T."/>
            <person name="Kawaji H."/>
            <person name="Kawagashira N."/>
            <person name="Kawashima T."/>
            <person name="Kojima M."/>
            <person name="Kondo S."/>
            <person name="Konno H."/>
            <person name="Nakano K."/>
            <person name="Ninomiya N."/>
            <person name="Nishio T."/>
            <person name="Okada M."/>
            <person name="Plessy C."/>
            <person name="Shibata K."/>
            <person name="Shiraki T."/>
            <person name="Suzuki S."/>
            <person name="Tagami M."/>
            <person name="Waki K."/>
            <person name="Watahiki A."/>
            <person name="Okamura-Oho Y."/>
            <person name="Suzuki H."/>
            <person name="Kawai J."/>
            <person name="Hayashizaki Y."/>
        </authorList>
    </citation>
    <scope>NUCLEOTIDE SEQUENCE [LARGE SCALE MRNA]</scope>
    <source>
        <strain>C57BL/6J</strain>
        <tissue>Amnion</tissue>
        <tissue>Bone marrow</tissue>
        <tissue>Brain</tissue>
        <tissue>Heart</tissue>
    </source>
</reference>
<reference key="4">
    <citation type="journal article" date="2004" name="Genome Res.">
        <title>The status, quality, and expansion of the NIH full-length cDNA project: the Mammalian Gene Collection (MGC).</title>
        <authorList>
            <consortium name="The MGC Project Team"/>
        </authorList>
    </citation>
    <scope>NUCLEOTIDE SEQUENCE [LARGE SCALE MRNA]</scope>
    <source>
        <tissue>Eye</tissue>
        <tissue>Olfactory epithelium</tissue>
    </source>
</reference>
<reference key="5">
    <citation type="submission" date="2009-01" db="UniProtKB">
        <authorList>
            <person name="Lubec G."/>
            <person name="Klug S."/>
            <person name="Yang J.W."/>
            <person name="Zigmond M."/>
            <person name="Kang S.U."/>
            <person name="Sunyer B."/>
            <person name="Chen W.-Q."/>
        </authorList>
    </citation>
    <scope>PROTEIN SEQUENCE OF 49-64; 68-130; 164-185; 189-208; 277-308; 322-337; 387-400; 404-430; 437-457; 461-485 AND 495-506</scope>
    <scope>IDENTIFICATION BY MASS SPECTROMETRY</scope>
    <source>
        <strain>C57BL/6J</strain>
        <strain>OF1</strain>
        <tissue>Brain</tissue>
        <tissue>Hippocampus</tissue>
    </source>
</reference>
<reference key="6">
    <citation type="journal article" date="2004" name="Am. J. Physiol.">
        <title>Expression of the 56-kDa B2 subunit isoform of the vacuolar H(+)-ATPase in proton-secreting cells of the kidney and epididymis.</title>
        <authorList>
            <person name="Paunescu T.G."/>
            <person name="Da Silva N."/>
            <person name="Marshansky V."/>
            <person name="McKee M."/>
            <person name="Breton S."/>
            <person name="Brown D."/>
        </authorList>
    </citation>
    <scope>SUBCELLULAR LOCATION</scope>
    <scope>TISSUE SPECIFICITY</scope>
</reference>
<reference key="7">
    <citation type="journal article" date="2005" name="Proc. Natl. Acad. Sci. U.S.A.">
        <title>The B1-subunit of the H(+) ATPase is required for maximal urinary acidification.</title>
        <authorList>
            <person name="Finberg K.E."/>
            <person name="Wagner C.A."/>
            <person name="Bailey M.A."/>
            <person name="Paunescu T.G."/>
            <person name="Breton S."/>
            <person name="Brown D."/>
            <person name="Giebisch G."/>
            <person name="Geibel J.P."/>
            <person name="Lifton R.P."/>
        </authorList>
    </citation>
    <scope>SUBCELLULAR LOCATION</scope>
    <scope>TISSUE SPECIFICITY</scope>
</reference>
<reference key="8">
    <citation type="journal article" date="2007" name="Am. J. Physiol.">
        <title>Compensatory membrane expression of the V-ATPase B2 subunit isoform in renal medullary intercalated cells of B1-deficient mice.</title>
        <authorList>
            <person name="Paunescu T.G."/>
            <person name="Russo L.M."/>
            <person name="Da Silva N."/>
            <person name="Kovacikova J."/>
            <person name="Mohebbi N."/>
            <person name="Van Hoek A.N."/>
            <person name="McKee M."/>
            <person name="Wagner C.A."/>
            <person name="Breton S."/>
            <person name="Brown D."/>
        </authorList>
    </citation>
    <scope>FUNCTION</scope>
    <scope>SUBCELLULAR LOCATION</scope>
    <scope>TISSUE SPECIFICITY</scope>
</reference>
<reference key="9">
    <citation type="journal article" date="2010" name="Cell">
        <title>A tissue-specific atlas of mouse protein phosphorylation and expression.</title>
        <authorList>
            <person name="Huttlin E.L."/>
            <person name="Jedrychowski M.P."/>
            <person name="Elias J.E."/>
            <person name="Goswami T."/>
            <person name="Rad R."/>
            <person name="Beausoleil S.A."/>
            <person name="Villen J."/>
            <person name="Haas W."/>
            <person name="Sowa M.E."/>
            <person name="Gygi S.P."/>
        </authorList>
    </citation>
    <scope>IDENTIFICATION BY MASS SPECTROMETRY [LARGE SCALE ANALYSIS]</scope>
    <source>
        <tissue>Brain</tissue>
        <tissue>Brown adipose tissue</tissue>
        <tissue>Heart</tissue>
        <tissue>Kidney</tissue>
        <tissue>Liver</tissue>
        <tissue>Lung</tissue>
        <tissue>Pancreas</tissue>
        <tissue>Spleen</tissue>
        <tissue>Testis</tissue>
    </source>
</reference>
<reference key="10">
    <citation type="journal article" date="2014" name="Cell Res.">
        <title>De novo mutation in ATP6V1B2 impairs lysosome acidification and causes dominant deafness-onychodystrophy syndrome.</title>
        <authorList>
            <person name="Yuan Y."/>
            <person name="Zhang J."/>
            <person name="Chang Q."/>
            <person name="Zeng J."/>
            <person name="Xin F."/>
            <person name="Wang J."/>
            <person name="Zhu Q."/>
            <person name="Wu J."/>
            <person name="Lu J."/>
            <person name="Guo W."/>
            <person name="Yan X."/>
            <person name="Jiang H."/>
            <person name="Zhou B."/>
            <person name="Li Q."/>
            <person name="Gao X."/>
            <person name="Yuan H."/>
            <person name="Yang S."/>
            <person name="Han D."/>
            <person name="Mao Z."/>
            <person name="Chen P."/>
            <person name="Lin X."/>
            <person name="Dai P."/>
        </authorList>
    </citation>
    <scope>DISRUPTION PHENOTYPE</scope>
    <scope>TISSUE SPECIFICITY</scope>
</reference>
<reference key="11">
    <citation type="journal article" date="2018" name="Am. J. Physiol.">
        <title>H+-ATPase B1 subunit localizes to thick ascending limb and distal convoluted tubule of rodent and human kidney.</title>
        <authorList>
            <person name="Frische S."/>
            <person name="Chambrey R."/>
            <person name="Trepiccione F."/>
            <person name="Zamani R."/>
            <person name="Marcussen N."/>
            <person name="Alexander R.T."/>
            <person name="Skjoedt K."/>
            <person name="Svenningsen P."/>
            <person name="Dimke H."/>
        </authorList>
    </citation>
    <scope>SUBCELLULAR LOCATION</scope>
    <scope>TISSUE SPECIFICITY</scope>
</reference>
<feature type="chain" id="PRO_0000144627" description="V-type proton ATPase subunit B, brain isoform">
    <location>
        <begin position="1"/>
        <end position="511"/>
    </location>
</feature>
<feature type="binding site" evidence="1">
    <location>
        <position position="400"/>
    </location>
    <ligand>
        <name>ATP</name>
        <dbReference type="ChEBI" id="CHEBI:30616"/>
    </ligand>
</feature>
<feature type="sequence conflict" description="In Ref. 1; AAC52411." evidence="8" ref="1">
    <original>GG</original>
    <variation>RP</variation>
    <location>
        <begin position="22"/>
        <end position="23"/>
    </location>
</feature>
<feature type="sequence conflict" description="In Ref. 1; AAC52411." evidence="8" ref="1">
    <original>S</original>
    <variation>G</variation>
    <location>
        <position position="36"/>
    </location>
</feature>
<feature type="sequence conflict" description="In Ref. 3; BAE35206." evidence="8" ref="3">
    <original>T</original>
    <variation>A</variation>
    <location>
        <position position="80"/>
    </location>
</feature>
<feature type="sequence conflict" description="In Ref. 1; AAC52411." evidence="8" ref="1">
    <original>QV</original>
    <variation>AS</variation>
    <location>
        <begin position="85"/>
        <end position="86"/>
    </location>
</feature>
<feature type="sequence conflict" description="In Ref. 1; AAC52411." evidence="8" ref="1">
    <original>NLA</original>
    <variation>ILP</variation>
    <location>
        <begin position="262"/>
        <end position="264"/>
    </location>
</feature>
<feature type="sequence conflict" description="In Ref. 3; BAE35536/BAE35612." evidence="8" ref="3">
    <original>E</original>
    <variation>K</variation>
    <location>
        <position position="270"/>
    </location>
</feature>
<feature type="sequence conflict" description="In Ref. 1; AAC52411." evidence="8" ref="1">
    <original>R</original>
    <variation>C</variation>
    <location>
        <position position="276"/>
    </location>
</feature>
<feature type="sequence conflict" description="In Ref. 1; AAC52411." evidence="8" ref="1">
    <original>M</original>
    <variation>T</variation>
    <location>
        <position position="300"/>
    </location>
</feature>
<feature type="sequence conflict" description="In Ref. 1; AAC52411." evidence="8" ref="1">
    <original>A</original>
    <variation>P</variation>
    <location>
        <position position="304"/>
    </location>
</feature>
<feature type="sequence conflict" description="In Ref. 3; BAE35536/BAE35612." evidence="8" ref="3">
    <original>P</original>
    <variation>H</variation>
    <location>
        <position position="318"/>
    </location>
</feature>
<feature type="sequence conflict" description="In Ref. 3; BAE40674." evidence="8" ref="3">
    <original>I</original>
    <variation>M</variation>
    <location>
        <position position="365"/>
    </location>
</feature>
<feature type="sequence conflict" description="In Ref. 3; BAE35206." evidence="8" ref="3">
    <original>Y</original>
    <variation>C</variation>
    <location>
        <position position="371"/>
    </location>
</feature>
<feature type="sequence conflict" description="In Ref. 3; BAE30303/BAE30526." evidence="8" ref="3">
    <original>T</original>
    <variation>I</variation>
    <location>
        <position position="373"/>
    </location>
</feature>
<feature type="sequence conflict" description="In Ref. 1; AAC52411." evidence="8" ref="1">
    <original>A</original>
    <variation>P</variation>
    <location>
        <position position="405"/>
    </location>
</feature>
<feature type="sequence conflict" description="In Ref. 3; BAE30197." evidence="8" ref="3">
    <original>A</original>
    <variation>V</variation>
    <location>
        <position position="437"/>
    </location>
</feature>
<dbReference type="EMBL" id="U13838">
    <property type="protein sequence ID" value="AAC52411.1"/>
    <property type="molecule type" value="Genomic_DNA"/>
</dbReference>
<dbReference type="EMBL" id="Y12634">
    <property type="protein sequence ID" value="CAA73182.1"/>
    <property type="molecule type" value="mRNA"/>
</dbReference>
<dbReference type="EMBL" id="AK146499">
    <property type="protein sequence ID" value="BAE27215.1"/>
    <property type="molecule type" value="mRNA"/>
</dbReference>
<dbReference type="EMBL" id="AK151200">
    <property type="protein sequence ID" value="BAE30197.1"/>
    <property type="molecule type" value="mRNA"/>
</dbReference>
<dbReference type="EMBL" id="AK151322">
    <property type="protein sequence ID" value="BAE30303.1"/>
    <property type="status" value="ALT_INIT"/>
    <property type="molecule type" value="mRNA"/>
</dbReference>
<dbReference type="EMBL" id="AK151586">
    <property type="protein sequence ID" value="BAE30526.1"/>
    <property type="status" value="ALT_INIT"/>
    <property type="molecule type" value="mRNA"/>
</dbReference>
<dbReference type="EMBL" id="AK152718">
    <property type="protein sequence ID" value="BAE31441.1"/>
    <property type="status" value="ALT_INIT"/>
    <property type="molecule type" value="mRNA"/>
</dbReference>
<dbReference type="EMBL" id="AK152766">
    <property type="protein sequence ID" value="BAE31479.1"/>
    <property type="molecule type" value="mRNA"/>
</dbReference>
<dbReference type="EMBL" id="AK159133">
    <property type="protein sequence ID" value="BAE34845.1"/>
    <property type="molecule type" value="mRNA"/>
</dbReference>
<dbReference type="EMBL" id="AK159153">
    <property type="protein sequence ID" value="BAE34860.1"/>
    <property type="molecule type" value="mRNA"/>
</dbReference>
<dbReference type="EMBL" id="AK159586">
    <property type="protein sequence ID" value="BAE35206.1"/>
    <property type="molecule type" value="mRNA"/>
</dbReference>
<dbReference type="EMBL" id="AK159701">
    <property type="protein sequence ID" value="BAE35300.1"/>
    <property type="molecule type" value="mRNA"/>
</dbReference>
<dbReference type="EMBL" id="AK159986">
    <property type="protein sequence ID" value="BAE35536.1"/>
    <property type="molecule type" value="mRNA"/>
</dbReference>
<dbReference type="EMBL" id="AK160080">
    <property type="protein sequence ID" value="BAE35612.1"/>
    <property type="molecule type" value="mRNA"/>
</dbReference>
<dbReference type="EMBL" id="AK160854">
    <property type="protein sequence ID" value="BAE36047.1"/>
    <property type="molecule type" value="mRNA"/>
</dbReference>
<dbReference type="EMBL" id="AK166669">
    <property type="protein sequence ID" value="BAE38930.1"/>
    <property type="molecule type" value="mRNA"/>
</dbReference>
<dbReference type="EMBL" id="AK168852">
    <property type="protein sequence ID" value="BAE40674.1"/>
    <property type="molecule type" value="mRNA"/>
</dbReference>
<dbReference type="EMBL" id="AK169155">
    <property type="protein sequence ID" value="BAE40934.1"/>
    <property type="molecule type" value="mRNA"/>
</dbReference>
<dbReference type="EMBL" id="AK169270">
    <property type="protein sequence ID" value="BAE41031.1"/>
    <property type="molecule type" value="mRNA"/>
</dbReference>
<dbReference type="EMBL" id="BC012497">
    <property type="protein sequence ID" value="AAH12497.1"/>
    <property type="molecule type" value="mRNA"/>
</dbReference>
<dbReference type="EMBL" id="BC046302">
    <property type="protein sequence ID" value="AAH46302.1"/>
    <property type="molecule type" value="mRNA"/>
</dbReference>
<dbReference type="EMBL" id="BC085300">
    <property type="protein sequence ID" value="AAH85300.1"/>
    <property type="molecule type" value="mRNA"/>
</dbReference>
<dbReference type="CCDS" id="CCDS40358.1"/>
<dbReference type="RefSeq" id="NP_031535.2">
    <property type="nucleotide sequence ID" value="NM_007509.3"/>
</dbReference>
<dbReference type="PDB" id="9BRA">
    <property type="method" value="EM"/>
    <property type="resolution" value="4.30 A"/>
    <property type="chains" value="3/4/5=1-511"/>
</dbReference>
<dbReference type="PDB" id="9BRQ">
    <property type="method" value="EM"/>
    <property type="resolution" value="4.30 A"/>
    <property type="chains" value="3/4/5=1-511"/>
</dbReference>
<dbReference type="PDB" id="9BRR">
    <property type="method" value="EM"/>
    <property type="resolution" value="4.50 A"/>
    <property type="chains" value="3/4/5=1-511"/>
</dbReference>
<dbReference type="PDB" id="9BRS">
    <property type="method" value="EM"/>
    <property type="resolution" value="4.40 A"/>
    <property type="chains" value="3/4/5=1-511"/>
</dbReference>
<dbReference type="PDB" id="9BRT">
    <property type="method" value="EM"/>
    <property type="resolution" value="4.30 A"/>
    <property type="chains" value="3/4/5=1-511"/>
</dbReference>
<dbReference type="PDB" id="9BRU">
    <property type="method" value="EM"/>
    <property type="resolution" value="4.40 A"/>
    <property type="chains" value="3/4/5=1-511"/>
</dbReference>
<dbReference type="PDBsum" id="9BRA"/>
<dbReference type="PDBsum" id="9BRQ"/>
<dbReference type="PDBsum" id="9BRR"/>
<dbReference type="PDBsum" id="9BRS"/>
<dbReference type="PDBsum" id="9BRT"/>
<dbReference type="PDBsum" id="9BRU"/>
<dbReference type="EMDB" id="EMD-44839"/>
<dbReference type="EMDB" id="EMD-44840"/>
<dbReference type="EMDB" id="EMD-44841"/>
<dbReference type="EMDB" id="EMD-44842"/>
<dbReference type="EMDB" id="EMD-44843"/>
<dbReference type="EMDB" id="EMD-44844"/>
<dbReference type="SMR" id="P62814"/>
<dbReference type="BioGRID" id="198262">
    <property type="interactions" value="26"/>
</dbReference>
<dbReference type="FunCoup" id="P62814">
    <property type="interactions" value="2948"/>
</dbReference>
<dbReference type="IntAct" id="P62814">
    <property type="interactions" value="8"/>
</dbReference>
<dbReference type="MINT" id="P62814"/>
<dbReference type="STRING" id="10090.ENSMUSP00000006435"/>
<dbReference type="TCDB" id="3.A.2.2.6">
    <property type="family name" value="the h+- or na+-translocating f-type, v-type and a-type atpase (f-atpase) superfamily"/>
</dbReference>
<dbReference type="GlyGen" id="P62814">
    <property type="glycosylation" value="2 sites, 1 N-linked glycan (1 site), 1 O-linked glycan (1 site)"/>
</dbReference>
<dbReference type="iPTMnet" id="P62814"/>
<dbReference type="MetOSite" id="P62814"/>
<dbReference type="PhosphoSitePlus" id="P62814"/>
<dbReference type="SwissPalm" id="P62814"/>
<dbReference type="REPRODUCTION-2DPAGE" id="P62814"/>
<dbReference type="jPOST" id="P62814"/>
<dbReference type="PaxDb" id="10090-ENSMUSP00000006435"/>
<dbReference type="PeptideAtlas" id="P62814"/>
<dbReference type="ProteomicsDB" id="297957"/>
<dbReference type="Pumba" id="P62814"/>
<dbReference type="Antibodypedia" id="9185">
    <property type="antibodies" value="252 antibodies from 31 providers"/>
</dbReference>
<dbReference type="DNASU" id="11966"/>
<dbReference type="Ensembl" id="ENSMUST00000006435.8">
    <property type="protein sequence ID" value="ENSMUSP00000006435.8"/>
    <property type="gene ID" value="ENSMUSG00000006273.15"/>
</dbReference>
<dbReference type="GeneID" id="11966"/>
<dbReference type="KEGG" id="mmu:11966"/>
<dbReference type="UCSC" id="uc009lww.2">
    <property type="organism name" value="mouse"/>
</dbReference>
<dbReference type="AGR" id="MGI:109618"/>
<dbReference type="CTD" id="526"/>
<dbReference type="MGI" id="MGI:109618">
    <property type="gene designation" value="Atp6v1b2"/>
</dbReference>
<dbReference type="VEuPathDB" id="HostDB:ENSMUSG00000006273"/>
<dbReference type="eggNOG" id="KOG1351">
    <property type="taxonomic scope" value="Eukaryota"/>
</dbReference>
<dbReference type="GeneTree" id="ENSGT00940000155068"/>
<dbReference type="HOGENOM" id="CLU_022916_3_0_1"/>
<dbReference type="InParanoid" id="P62814"/>
<dbReference type="OMA" id="EGFKIKP"/>
<dbReference type="OrthoDB" id="1735853at2759"/>
<dbReference type="PhylomeDB" id="P62814"/>
<dbReference type="TreeFam" id="TF300313"/>
<dbReference type="Reactome" id="R-MMU-1222556">
    <property type="pathway name" value="ROS and RNS production in phagocytes"/>
</dbReference>
<dbReference type="Reactome" id="R-MMU-77387">
    <property type="pathway name" value="Insulin receptor recycling"/>
</dbReference>
<dbReference type="Reactome" id="R-MMU-917977">
    <property type="pathway name" value="Transferrin endocytosis and recycling"/>
</dbReference>
<dbReference type="Reactome" id="R-MMU-9639288">
    <property type="pathway name" value="Amino acids regulate mTORC1"/>
</dbReference>
<dbReference type="Reactome" id="R-MMU-983712">
    <property type="pathway name" value="Ion channel transport"/>
</dbReference>
<dbReference type="BioGRID-ORCS" id="11966">
    <property type="hits" value="28 hits in 79 CRISPR screens"/>
</dbReference>
<dbReference type="CD-CODE" id="CE726F99">
    <property type="entry name" value="Postsynaptic density"/>
</dbReference>
<dbReference type="ChiTaRS" id="Atp6v1b2">
    <property type="organism name" value="mouse"/>
</dbReference>
<dbReference type="PRO" id="PR:P62814"/>
<dbReference type="Proteomes" id="UP000000589">
    <property type="component" value="Chromosome 8"/>
</dbReference>
<dbReference type="RNAct" id="P62814">
    <property type="molecule type" value="protein"/>
</dbReference>
<dbReference type="Bgee" id="ENSMUSG00000006273">
    <property type="expression patterns" value="Expressed in pontine nuclear group and 274 other cell types or tissues"/>
</dbReference>
<dbReference type="GO" id="GO:0016324">
    <property type="term" value="C:apical plasma membrane"/>
    <property type="evidence" value="ECO:0000314"/>
    <property type="project" value="UniProtKB"/>
</dbReference>
<dbReference type="GO" id="GO:0030665">
    <property type="term" value="C:clathrin-coated vesicle membrane"/>
    <property type="evidence" value="ECO:0007669"/>
    <property type="project" value="UniProtKB-SubCell"/>
</dbReference>
<dbReference type="GO" id="GO:0005737">
    <property type="term" value="C:cytoplasm"/>
    <property type="evidence" value="ECO:0000314"/>
    <property type="project" value="UniProtKB"/>
</dbReference>
<dbReference type="GO" id="GO:0005829">
    <property type="term" value="C:cytosol"/>
    <property type="evidence" value="ECO:0000314"/>
    <property type="project" value="UniProtKB"/>
</dbReference>
<dbReference type="GO" id="GO:0098850">
    <property type="term" value="C:extrinsic component of synaptic vesicle membrane"/>
    <property type="evidence" value="ECO:0007669"/>
    <property type="project" value="Ensembl"/>
</dbReference>
<dbReference type="GO" id="GO:0042470">
    <property type="term" value="C:melanosome"/>
    <property type="evidence" value="ECO:0007669"/>
    <property type="project" value="UniProtKB-SubCell"/>
</dbReference>
<dbReference type="GO" id="GO:0005902">
    <property type="term" value="C:microvillus"/>
    <property type="evidence" value="ECO:0000314"/>
    <property type="project" value="UniProtKB"/>
</dbReference>
<dbReference type="GO" id="GO:0043209">
    <property type="term" value="C:myelin sheath"/>
    <property type="evidence" value="ECO:0007005"/>
    <property type="project" value="UniProtKB"/>
</dbReference>
<dbReference type="GO" id="GO:0005886">
    <property type="term" value="C:plasma membrane"/>
    <property type="evidence" value="ECO:0000314"/>
    <property type="project" value="UniProtKB"/>
</dbReference>
<dbReference type="GO" id="GO:0001726">
    <property type="term" value="C:ruffle"/>
    <property type="evidence" value="ECO:0000314"/>
    <property type="project" value="UniProtKB"/>
</dbReference>
<dbReference type="GO" id="GO:0000221">
    <property type="term" value="C:vacuolar proton-transporting V-type ATPase, V1 domain"/>
    <property type="evidence" value="ECO:0000250"/>
    <property type="project" value="UniProtKB"/>
</dbReference>
<dbReference type="GO" id="GO:0005524">
    <property type="term" value="F:ATP binding"/>
    <property type="evidence" value="ECO:0007669"/>
    <property type="project" value="UniProtKB-KW"/>
</dbReference>
<dbReference type="GO" id="GO:0046961">
    <property type="term" value="F:proton-transporting ATPase activity, rotational mechanism"/>
    <property type="evidence" value="ECO:0007669"/>
    <property type="project" value="InterPro"/>
</dbReference>
<dbReference type="GO" id="GO:0046034">
    <property type="term" value="P:ATP metabolic process"/>
    <property type="evidence" value="ECO:0007669"/>
    <property type="project" value="InterPro"/>
</dbReference>
<dbReference type="GO" id="GO:0097401">
    <property type="term" value="P:synaptic vesicle lumen acidification"/>
    <property type="evidence" value="ECO:0000314"/>
    <property type="project" value="SynGO"/>
</dbReference>
<dbReference type="CDD" id="cd18112">
    <property type="entry name" value="ATP-synt_V_A-type_beta_C"/>
    <property type="match status" value="1"/>
</dbReference>
<dbReference type="CDD" id="cd18118">
    <property type="entry name" value="ATP-synt_V_A-type_beta_N"/>
    <property type="match status" value="1"/>
</dbReference>
<dbReference type="CDD" id="cd01135">
    <property type="entry name" value="V_A-ATPase_B"/>
    <property type="match status" value="1"/>
</dbReference>
<dbReference type="FunFam" id="3.40.50.12240:FF:000001">
    <property type="entry name" value="V-type proton ATPase subunit B, brain"/>
    <property type="match status" value="1"/>
</dbReference>
<dbReference type="Gene3D" id="3.40.50.12240">
    <property type="match status" value="1"/>
</dbReference>
<dbReference type="HAMAP" id="MF_00310">
    <property type="entry name" value="ATP_synth_B_arch"/>
    <property type="match status" value="1"/>
</dbReference>
<dbReference type="InterPro" id="IPR055190">
    <property type="entry name" value="ATP-synt_VA_C"/>
</dbReference>
<dbReference type="InterPro" id="IPR020003">
    <property type="entry name" value="ATPase_a/bsu_AS"/>
</dbReference>
<dbReference type="InterPro" id="IPR004100">
    <property type="entry name" value="ATPase_F1/V1/A1_a/bsu_N"/>
</dbReference>
<dbReference type="InterPro" id="IPR000194">
    <property type="entry name" value="ATPase_F1/V1/A1_a/bsu_nucl-bd"/>
</dbReference>
<dbReference type="InterPro" id="IPR005723">
    <property type="entry name" value="ATPase_V1-cplx_bsu"/>
</dbReference>
<dbReference type="InterPro" id="IPR027417">
    <property type="entry name" value="P-loop_NTPase"/>
</dbReference>
<dbReference type="InterPro" id="IPR022879">
    <property type="entry name" value="V-ATPase_su_B/beta"/>
</dbReference>
<dbReference type="NCBIfam" id="NF003235">
    <property type="entry name" value="PRK04196.1"/>
    <property type="match status" value="1"/>
</dbReference>
<dbReference type="NCBIfam" id="TIGR01040">
    <property type="entry name" value="V-ATPase_V1_B"/>
    <property type="match status" value="1"/>
</dbReference>
<dbReference type="PANTHER" id="PTHR43389">
    <property type="entry name" value="V-TYPE PROTON ATPASE SUBUNIT B"/>
    <property type="match status" value="1"/>
</dbReference>
<dbReference type="PANTHER" id="PTHR43389:SF5">
    <property type="entry name" value="V-TYPE PROTON ATPASE SUBUNIT B, BRAIN ISOFORM"/>
    <property type="match status" value="1"/>
</dbReference>
<dbReference type="Pfam" id="PF00006">
    <property type="entry name" value="ATP-synt_ab"/>
    <property type="match status" value="1"/>
</dbReference>
<dbReference type="Pfam" id="PF02874">
    <property type="entry name" value="ATP-synt_ab_N"/>
    <property type="match status" value="1"/>
</dbReference>
<dbReference type="Pfam" id="PF22919">
    <property type="entry name" value="ATP-synt_VA_C"/>
    <property type="match status" value="1"/>
</dbReference>
<dbReference type="PIRSF" id="PIRSF039114">
    <property type="entry name" value="V-ATPsynth_beta/V-ATPase_B"/>
    <property type="match status" value="1"/>
</dbReference>
<dbReference type="SUPFAM" id="SSF52540">
    <property type="entry name" value="P-loop containing nucleoside triphosphate hydrolases"/>
    <property type="match status" value="1"/>
</dbReference>
<dbReference type="PROSITE" id="PS00152">
    <property type="entry name" value="ATPASE_ALPHA_BETA"/>
    <property type="match status" value="1"/>
</dbReference>
<protein>
    <recommendedName>
        <fullName>V-type proton ATPase subunit B, brain isoform</fullName>
        <shortName>V-ATPase subunit B 2</shortName>
    </recommendedName>
    <alternativeName>
        <fullName>Endomembrane proton pump 58 kDa subunit</fullName>
    </alternativeName>
    <alternativeName>
        <fullName>Vacuolar proton pump subunit B 2</fullName>
    </alternativeName>
</protein>